<accession>Q0AJF8</accession>
<gene>
    <name evidence="1" type="primary">dapD</name>
    <name type="ordered locus">Neut_0229</name>
</gene>
<proteinExistence type="inferred from homology"/>
<keyword id="KW-0012">Acyltransferase</keyword>
<keyword id="KW-0028">Amino-acid biosynthesis</keyword>
<keyword id="KW-0963">Cytoplasm</keyword>
<keyword id="KW-0220">Diaminopimelate biosynthesis</keyword>
<keyword id="KW-0457">Lysine biosynthesis</keyword>
<keyword id="KW-0677">Repeat</keyword>
<keyword id="KW-0808">Transferase</keyword>
<dbReference type="EC" id="2.3.1.117" evidence="1"/>
<dbReference type="EMBL" id="CP000450">
    <property type="protein sequence ID" value="ABI58513.1"/>
    <property type="molecule type" value="Genomic_DNA"/>
</dbReference>
<dbReference type="RefSeq" id="WP_011633357.1">
    <property type="nucleotide sequence ID" value="NC_008344.1"/>
</dbReference>
<dbReference type="SMR" id="Q0AJF8"/>
<dbReference type="STRING" id="335283.Neut_0229"/>
<dbReference type="KEGG" id="net:Neut_0229"/>
<dbReference type="eggNOG" id="COG2171">
    <property type="taxonomic scope" value="Bacteria"/>
</dbReference>
<dbReference type="HOGENOM" id="CLU_050859_0_1_4"/>
<dbReference type="OrthoDB" id="9775362at2"/>
<dbReference type="UniPathway" id="UPA00034">
    <property type="reaction ID" value="UER00019"/>
</dbReference>
<dbReference type="Proteomes" id="UP000001966">
    <property type="component" value="Chromosome"/>
</dbReference>
<dbReference type="GO" id="GO:0005737">
    <property type="term" value="C:cytoplasm"/>
    <property type="evidence" value="ECO:0007669"/>
    <property type="project" value="UniProtKB-SubCell"/>
</dbReference>
<dbReference type="GO" id="GO:0008666">
    <property type="term" value="F:2,3,4,5-tetrahydropyridine-2,6-dicarboxylate N-succinyltransferase activity"/>
    <property type="evidence" value="ECO:0007669"/>
    <property type="project" value="UniProtKB-UniRule"/>
</dbReference>
<dbReference type="GO" id="GO:0016779">
    <property type="term" value="F:nucleotidyltransferase activity"/>
    <property type="evidence" value="ECO:0007669"/>
    <property type="project" value="TreeGrafter"/>
</dbReference>
<dbReference type="GO" id="GO:0019877">
    <property type="term" value="P:diaminopimelate biosynthetic process"/>
    <property type="evidence" value="ECO:0007669"/>
    <property type="project" value="UniProtKB-UniRule"/>
</dbReference>
<dbReference type="GO" id="GO:0009089">
    <property type="term" value="P:lysine biosynthetic process via diaminopimelate"/>
    <property type="evidence" value="ECO:0007669"/>
    <property type="project" value="UniProtKB-UniRule"/>
</dbReference>
<dbReference type="CDD" id="cd03350">
    <property type="entry name" value="LbH_THP_succinylT"/>
    <property type="match status" value="1"/>
</dbReference>
<dbReference type="Gene3D" id="2.160.10.10">
    <property type="entry name" value="Hexapeptide repeat proteins"/>
    <property type="match status" value="1"/>
</dbReference>
<dbReference type="Gene3D" id="1.10.166.10">
    <property type="entry name" value="Tetrahydrodipicolinate-N-succinyltransferase, N-terminal domain"/>
    <property type="match status" value="1"/>
</dbReference>
<dbReference type="HAMAP" id="MF_00811">
    <property type="entry name" value="DapD"/>
    <property type="match status" value="1"/>
</dbReference>
<dbReference type="InterPro" id="IPR005664">
    <property type="entry name" value="DapD_Trfase_Hexpep_rpt_fam"/>
</dbReference>
<dbReference type="InterPro" id="IPR001451">
    <property type="entry name" value="Hexapep"/>
</dbReference>
<dbReference type="InterPro" id="IPR018357">
    <property type="entry name" value="Hexapep_transf_CS"/>
</dbReference>
<dbReference type="InterPro" id="IPR023180">
    <property type="entry name" value="THP_succinylTrfase_dom1"/>
</dbReference>
<dbReference type="InterPro" id="IPR037133">
    <property type="entry name" value="THP_succinylTrfase_N_sf"/>
</dbReference>
<dbReference type="InterPro" id="IPR011004">
    <property type="entry name" value="Trimer_LpxA-like_sf"/>
</dbReference>
<dbReference type="NCBIfam" id="TIGR00965">
    <property type="entry name" value="dapD"/>
    <property type="match status" value="1"/>
</dbReference>
<dbReference type="NCBIfam" id="NF008808">
    <property type="entry name" value="PRK11830.1"/>
    <property type="match status" value="1"/>
</dbReference>
<dbReference type="PANTHER" id="PTHR19136:SF52">
    <property type="entry name" value="2,3,4,5-TETRAHYDROPYRIDINE-2,6-DICARBOXYLATE N-SUCCINYLTRANSFERASE"/>
    <property type="match status" value="1"/>
</dbReference>
<dbReference type="PANTHER" id="PTHR19136">
    <property type="entry name" value="MOLYBDENUM COFACTOR GUANYLYLTRANSFERASE"/>
    <property type="match status" value="1"/>
</dbReference>
<dbReference type="Pfam" id="PF14602">
    <property type="entry name" value="Hexapep_2"/>
    <property type="match status" value="1"/>
</dbReference>
<dbReference type="Pfam" id="PF14805">
    <property type="entry name" value="THDPS_N_2"/>
    <property type="match status" value="1"/>
</dbReference>
<dbReference type="SUPFAM" id="SSF51161">
    <property type="entry name" value="Trimeric LpxA-like enzymes"/>
    <property type="match status" value="1"/>
</dbReference>
<dbReference type="PROSITE" id="PS00101">
    <property type="entry name" value="HEXAPEP_TRANSFERASES"/>
    <property type="match status" value="1"/>
</dbReference>
<reference key="1">
    <citation type="journal article" date="2007" name="Environ. Microbiol.">
        <title>Whole-genome analysis of the ammonia-oxidizing bacterium, Nitrosomonas eutropha C91: implications for niche adaptation.</title>
        <authorList>
            <person name="Stein L.Y."/>
            <person name="Arp D.J."/>
            <person name="Berube P.M."/>
            <person name="Chain P.S."/>
            <person name="Hauser L."/>
            <person name="Jetten M.S."/>
            <person name="Klotz M.G."/>
            <person name="Larimer F.W."/>
            <person name="Norton J.M."/>
            <person name="Op den Camp H.J.M."/>
            <person name="Shin M."/>
            <person name="Wei X."/>
        </authorList>
    </citation>
    <scope>NUCLEOTIDE SEQUENCE [LARGE SCALE GENOMIC DNA]</scope>
    <source>
        <strain>DSM 101675 / C91 / Nm57</strain>
    </source>
</reference>
<sequence length="273" mass="29801">MEQLQAVIEDAFERRAEITPRNVEANLKESVAQVINMLDTGKLRVAEKINDEWVTRQWVKKAVLLSFRMEDNYFIKGGFSNYFDKIPSKFADYSSRDFRDGGFRVVPPAAVRKGAFIANNVVLMPSYVNIGAYVDEGTMVDTWATVGSCAQVGKNVHLSGGVGIGGVLEPVQASPTIIEDNCFIGARSEIVEGVIVGENSVISMGVYIGQSTRIYNRETGEVTYGRIPSGSVVVSGSLPADNGRYSLYCAVIVKQVDAKTRSKTGINELLRGI</sequence>
<protein>
    <recommendedName>
        <fullName evidence="1">2,3,4,5-tetrahydropyridine-2,6-dicarboxylate N-succinyltransferase</fullName>
        <ecNumber evidence="1">2.3.1.117</ecNumber>
    </recommendedName>
    <alternativeName>
        <fullName evidence="1">Tetrahydrodipicolinate N-succinyltransferase</fullName>
        <shortName evidence="1">THDP succinyltransferase</shortName>
        <shortName evidence="1">THP succinyltransferase</shortName>
        <shortName evidence="1">Tetrahydropicolinate succinylase</shortName>
    </alternativeName>
</protein>
<name>DAPD_NITEC</name>
<organism>
    <name type="scientific">Nitrosomonas eutropha (strain DSM 101675 / C91 / Nm57)</name>
    <dbReference type="NCBI Taxonomy" id="335283"/>
    <lineage>
        <taxon>Bacteria</taxon>
        <taxon>Pseudomonadati</taxon>
        <taxon>Pseudomonadota</taxon>
        <taxon>Betaproteobacteria</taxon>
        <taxon>Nitrosomonadales</taxon>
        <taxon>Nitrosomonadaceae</taxon>
        <taxon>Nitrosomonas</taxon>
    </lineage>
</organism>
<evidence type="ECO:0000255" key="1">
    <source>
        <dbReference type="HAMAP-Rule" id="MF_00811"/>
    </source>
</evidence>
<comment type="catalytic activity">
    <reaction evidence="1">
        <text>(S)-2,3,4,5-tetrahydrodipicolinate + succinyl-CoA + H2O = (S)-2-succinylamino-6-oxoheptanedioate + CoA</text>
        <dbReference type="Rhea" id="RHEA:17325"/>
        <dbReference type="ChEBI" id="CHEBI:15377"/>
        <dbReference type="ChEBI" id="CHEBI:15685"/>
        <dbReference type="ChEBI" id="CHEBI:16845"/>
        <dbReference type="ChEBI" id="CHEBI:57287"/>
        <dbReference type="ChEBI" id="CHEBI:57292"/>
        <dbReference type="EC" id="2.3.1.117"/>
    </reaction>
</comment>
<comment type="pathway">
    <text evidence="1">Amino-acid biosynthesis; L-lysine biosynthesis via DAP pathway; LL-2,6-diaminopimelate from (S)-tetrahydrodipicolinate (succinylase route): step 1/3.</text>
</comment>
<comment type="subunit">
    <text evidence="1">Homotrimer.</text>
</comment>
<comment type="subcellular location">
    <subcellularLocation>
        <location evidence="1">Cytoplasm</location>
    </subcellularLocation>
</comment>
<comment type="similarity">
    <text evidence="1">Belongs to the transferase hexapeptide repeat family.</text>
</comment>
<feature type="chain" id="PRO_1000047154" description="2,3,4,5-tetrahydropyridine-2,6-dicarboxylate N-succinyltransferase">
    <location>
        <begin position="1"/>
        <end position="273"/>
    </location>
</feature>
<feature type="binding site" evidence="1">
    <location>
        <position position="104"/>
    </location>
    <ligand>
        <name>substrate</name>
    </ligand>
</feature>
<feature type="binding site" evidence="1">
    <location>
        <position position="141"/>
    </location>
    <ligand>
        <name>substrate</name>
    </ligand>
</feature>